<dbReference type="EMBL" id="CP000672">
    <property type="protein sequence ID" value="ABR00156.1"/>
    <property type="molecule type" value="Genomic_DNA"/>
</dbReference>
<dbReference type="SMR" id="A5UHA0"/>
<dbReference type="KEGG" id="hiq:CGSHiGG_06275"/>
<dbReference type="HOGENOM" id="CLU_066607_3_2_6"/>
<dbReference type="Proteomes" id="UP000001990">
    <property type="component" value="Chromosome"/>
</dbReference>
<dbReference type="GO" id="GO:0005737">
    <property type="term" value="C:cytoplasm"/>
    <property type="evidence" value="ECO:0007669"/>
    <property type="project" value="UniProtKB-SubCell"/>
</dbReference>
<dbReference type="GO" id="GO:0006282">
    <property type="term" value="P:regulation of DNA repair"/>
    <property type="evidence" value="ECO:0007669"/>
    <property type="project" value="UniProtKB-UniRule"/>
</dbReference>
<dbReference type="Gene3D" id="1.10.10.10">
    <property type="entry name" value="Winged helix-like DNA-binding domain superfamily/Winged helix DNA-binding domain"/>
    <property type="match status" value="3"/>
</dbReference>
<dbReference type="HAMAP" id="MF_01114">
    <property type="entry name" value="RecX"/>
    <property type="match status" value="1"/>
</dbReference>
<dbReference type="InterPro" id="IPR053926">
    <property type="entry name" value="RecX_HTH_1st"/>
</dbReference>
<dbReference type="InterPro" id="IPR053924">
    <property type="entry name" value="RecX_HTH_2nd"/>
</dbReference>
<dbReference type="InterPro" id="IPR053925">
    <property type="entry name" value="RecX_HTH_3rd"/>
</dbReference>
<dbReference type="InterPro" id="IPR003783">
    <property type="entry name" value="Regulatory_RecX"/>
</dbReference>
<dbReference type="InterPro" id="IPR036388">
    <property type="entry name" value="WH-like_DNA-bd_sf"/>
</dbReference>
<dbReference type="NCBIfam" id="NF001057">
    <property type="entry name" value="PRK00117.3-3"/>
    <property type="match status" value="1"/>
</dbReference>
<dbReference type="PANTHER" id="PTHR33602">
    <property type="entry name" value="REGULATORY PROTEIN RECX FAMILY PROTEIN"/>
    <property type="match status" value="1"/>
</dbReference>
<dbReference type="PANTHER" id="PTHR33602:SF1">
    <property type="entry name" value="REGULATORY PROTEIN RECX FAMILY PROTEIN"/>
    <property type="match status" value="1"/>
</dbReference>
<dbReference type="Pfam" id="PF21982">
    <property type="entry name" value="RecX_HTH1"/>
    <property type="match status" value="1"/>
</dbReference>
<dbReference type="Pfam" id="PF02631">
    <property type="entry name" value="RecX_HTH2"/>
    <property type="match status" value="1"/>
</dbReference>
<dbReference type="Pfam" id="PF21981">
    <property type="entry name" value="RecX_HTH3"/>
    <property type="match status" value="1"/>
</dbReference>
<sequence>MSSLAFNYIVNLLSHREYSEFELRNKMQEKNFSEEEIDEALSRCQAKNWQSDRRFSENYLNSRAQKGYGVGRIRQELRQLKGVSSDIIDEVLMESEIDWYEMAENLLRKKFPNYNEQQTPKMKQKIWQYMLSHGFRSDEFADLIGQNQSEWD</sequence>
<protein>
    <recommendedName>
        <fullName evidence="1">Regulatory protein RecX</fullName>
    </recommendedName>
</protein>
<reference key="1">
    <citation type="journal article" date="2007" name="Genome Biol.">
        <title>Characterization and modeling of the Haemophilus influenzae core and supragenomes based on the complete genomic sequences of Rd and 12 clinical nontypeable strains.</title>
        <authorList>
            <person name="Hogg J.S."/>
            <person name="Hu F.Z."/>
            <person name="Janto B."/>
            <person name="Boissy R."/>
            <person name="Hayes J."/>
            <person name="Keefe R."/>
            <person name="Post J.C."/>
            <person name="Ehrlich G.D."/>
        </authorList>
    </citation>
    <scope>NUCLEOTIDE SEQUENCE [LARGE SCALE GENOMIC DNA]</scope>
    <source>
        <strain>PittGG</strain>
    </source>
</reference>
<accession>A5UHA0</accession>
<evidence type="ECO:0000255" key="1">
    <source>
        <dbReference type="HAMAP-Rule" id="MF_01114"/>
    </source>
</evidence>
<keyword id="KW-0963">Cytoplasm</keyword>
<organism>
    <name type="scientific">Haemophilus influenzae (strain PittGG)</name>
    <dbReference type="NCBI Taxonomy" id="374931"/>
    <lineage>
        <taxon>Bacteria</taxon>
        <taxon>Pseudomonadati</taxon>
        <taxon>Pseudomonadota</taxon>
        <taxon>Gammaproteobacteria</taxon>
        <taxon>Pasteurellales</taxon>
        <taxon>Pasteurellaceae</taxon>
        <taxon>Haemophilus</taxon>
    </lineage>
</organism>
<name>RECX_HAEIG</name>
<proteinExistence type="inferred from homology"/>
<comment type="function">
    <text evidence="1">Modulates RecA activity.</text>
</comment>
<comment type="subcellular location">
    <subcellularLocation>
        <location evidence="1">Cytoplasm</location>
    </subcellularLocation>
</comment>
<comment type="similarity">
    <text evidence="1">Belongs to the RecX family.</text>
</comment>
<feature type="chain" id="PRO_1000065176" description="Regulatory protein RecX">
    <location>
        <begin position="1"/>
        <end position="152"/>
    </location>
</feature>
<gene>
    <name evidence="1" type="primary">recX</name>
    <name type="ordered locus">CGSHiGG_06275</name>
</gene>